<comment type="function">
    <text evidence="1">Possible metal-dependent hydrolase.</text>
</comment>
<comment type="cofactor">
    <cofactor evidence="1">
        <name>Zn(2+)</name>
        <dbReference type="ChEBI" id="CHEBI:29105"/>
    </cofactor>
    <text evidence="1">Binds 1 zinc ion per subunit.</text>
</comment>
<comment type="subunit">
    <text evidence="1">Homodimer.</text>
</comment>
<comment type="subcellular location">
    <subcellularLocation>
        <location evidence="1">Cytoplasm</location>
    </subcellularLocation>
</comment>
<comment type="similarity">
    <text evidence="1">Belongs to the metal hydrolase YfiT family.</text>
</comment>
<organism>
    <name type="scientific">Bacillus cereus (strain B4264)</name>
    <dbReference type="NCBI Taxonomy" id="405532"/>
    <lineage>
        <taxon>Bacteria</taxon>
        <taxon>Bacillati</taxon>
        <taxon>Bacillota</taxon>
        <taxon>Bacilli</taxon>
        <taxon>Bacillales</taxon>
        <taxon>Bacillaceae</taxon>
        <taxon>Bacillus</taxon>
        <taxon>Bacillus cereus group</taxon>
    </lineage>
</organism>
<sequence>MNDLRYPIGQFTYKRPITEEMIDTWIQEIEDLPNELTKAIKDLDQKQLDTPYRVGGWTVRQVVHHVVDSHMNSYIRFKLALTEKNPTIKPYKEEKWAELPDSKLPVDVSLVMLDSLHKRWVNLLYSLEIEDLEKTFNHPETGETKLAVAIGLYAWHGRHHTAHITSLRKRLNW</sequence>
<gene>
    <name type="ordered locus">BCB4264_A2719</name>
</gene>
<proteinExistence type="inferred from homology"/>
<keyword id="KW-0963">Cytoplasm</keyword>
<keyword id="KW-0378">Hydrolase</keyword>
<keyword id="KW-0479">Metal-binding</keyword>
<keyword id="KW-0862">Zinc</keyword>
<evidence type="ECO:0000255" key="1">
    <source>
        <dbReference type="HAMAP-Rule" id="MF_01256"/>
    </source>
</evidence>
<reference key="1">
    <citation type="submission" date="2008-10" db="EMBL/GenBank/DDBJ databases">
        <title>Genome sequence of Bacillus cereus B4264.</title>
        <authorList>
            <person name="Dodson R.J."/>
            <person name="Durkin A.S."/>
            <person name="Rosovitz M.J."/>
            <person name="Rasko D.A."/>
            <person name="Hoffmaster A."/>
            <person name="Ravel J."/>
            <person name="Sutton G."/>
        </authorList>
    </citation>
    <scope>NUCLEOTIDE SEQUENCE [LARGE SCALE GENOMIC DNA]</scope>
    <source>
        <strain>B4264</strain>
    </source>
</reference>
<accession>B7H841</accession>
<feature type="chain" id="PRO_1000139976" description="Putative metal-dependent hydrolase BCB4264_A2719">
    <location>
        <begin position="1"/>
        <end position="173"/>
    </location>
</feature>
<feature type="binding site" evidence="1">
    <location>
        <position position="65"/>
    </location>
    <ligand>
        <name>Zn(2+)</name>
        <dbReference type="ChEBI" id="CHEBI:29105"/>
    </ligand>
</feature>
<feature type="binding site" evidence="1">
    <location>
        <position position="156"/>
    </location>
    <ligand>
        <name>Zn(2+)</name>
        <dbReference type="ChEBI" id="CHEBI:29105"/>
    </ligand>
</feature>
<feature type="binding site" evidence="1">
    <location>
        <position position="160"/>
    </location>
    <ligand>
        <name>Zn(2+)</name>
        <dbReference type="ChEBI" id="CHEBI:29105"/>
    </ligand>
</feature>
<protein>
    <recommendedName>
        <fullName evidence="1">Putative metal-dependent hydrolase BCB4264_A2719</fullName>
        <ecNumber evidence="1">3.-.-.-</ecNumber>
    </recommendedName>
</protein>
<dbReference type="EC" id="3.-.-.-" evidence="1"/>
<dbReference type="EMBL" id="CP001176">
    <property type="protein sequence ID" value="ACK59560.1"/>
    <property type="molecule type" value="Genomic_DNA"/>
</dbReference>
<dbReference type="RefSeq" id="WP_000999070.1">
    <property type="nucleotide sequence ID" value="NZ_VEHB01000001.1"/>
</dbReference>
<dbReference type="SMR" id="B7H841"/>
<dbReference type="KEGG" id="bcb:BCB4264_A2719"/>
<dbReference type="HOGENOM" id="CLU_105789_1_0_9"/>
<dbReference type="Proteomes" id="UP000007096">
    <property type="component" value="Chromosome"/>
</dbReference>
<dbReference type="GO" id="GO:0005737">
    <property type="term" value="C:cytoplasm"/>
    <property type="evidence" value="ECO:0007669"/>
    <property type="project" value="UniProtKB-SubCell"/>
</dbReference>
<dbReference type="GO" id="GO:0016787">
    <property type="term" value="F:hydrolase activity"/>
    <property type="evidence" value="ECO:0007669"/>
    <property type="project" value="UniProtKB-UniRule"/>
</dbReference>
<dbReference type="GO" id="GO:0008270">
    <property type="term" value="F:zinc ion binding"/>
    <property type="evidence" value="ECO:0007669"/>
    <property type="project" value="UniProtKB-UniRule"/>
</dbReference>
<dbReference type="Gene3D" id="1.20.120.450">
    <property type="entry name" value="dinb family like domain"/>
    <property type="match status" value="1"/>
</dbReference>
<dbReference type="HAMAP" id="MF_01256">
    <property type="entry name" value="YfiT_hydrol"/>
    <property type="match status" value="1"/>
</dbReference>
<dbReference type="InterPro" id="IPR024775">
    <property type="entry name" value="DinB-like"/>
</dbReference>
<dbReference type="InterPro" id="IPR034660">
    <property type="entry name" value="DinB/YfiT-like"/>
</dbReference>
<dbReference type="InterPro" id="IPR023774">
    <property type="entry name" value="Put_metal_dep_hydrolase_YfiT"/>
</dbReference>
<dbReference type="NCBIfam" id="NF009807">
    <property type="entry name" value="PRK13291.1"/>
    <property type="match status" value="1"/>
</dbReference>
<dbReference type="Pfam" id="PF12867">
    <property type="entry name" value="DinB_2"/>
    <property type="match status" value="1"/>
</dbReference>
<dbReference type="SUPFAM" id="SSF109854">
    <property type="entry name" value="DinB/YfiT-like putative metalloenzymes"/>
    <property type="match status" value="1"/>
</dbReference>
<name>Y2719_BACC4</name>